<accession>Q6NCF3</accession>
<name>ISPG_RHOPA</name>
<comment type="function">
    <text evidence="1">Converts 2C-methyl-D-erythritol 2,4-cyclodiphosphate (ME-2,4cPP) into 1-hydroxy-2-methyl-2-(E)-butenyl 4-diphosphate.</text>
</comment>
<comment type="catalytic activity">
    <reaction evidence="1">
        <text>(2E)-4-hydroxy-3-methylbut-2-enyl diphosphate + oxidized [flavodoxin] + H2O + 2 H(+) = 2-C-methyl-D-erythritol 2,4-cyclic diphosphate + reduced [flavodoxin]</text>
        <dbReference type="Rhea" id="RHEA:43604"/>
        <dbReference type="Rhea" id="RHEA-COMP:10622"/>
        <dbReference type="Rhea" id="RHEA-COMP:10623"/>
        <dbReference type="ChEBI" id="CHEBI:15377"/>
        <dbReference type="ChEBI" id="CHEBI:15378"/>
        <dbReference type="ChEBI" id="CHEBI:57618"/>
        <dbReference type="ChEBI" id="CHEBI:58210"/>
        <dbReference type="ChEBI" id="CHEBI:58483"/>
        <dbReference type="ChEBI" id="CHEBI:128753"/>
        <dbReference type="EC" id="1.17.7.3"/>
    </reaction>
</comment>
<comment type="cofactor">
    <cofactor evidence="1">
        <name>[4Fe-4S] cluster</name>
        <dbReference type="ChEBI" id="CHEBI:49883"/>
    </cofactor>
    <text evidence="1">Binds 1 [4Fe-4S] cluster.</text>
</comment>
<comment type="pathway">
    <text evidence="1">Isoprenoid biosynthesis; isopentenyl diphosphate biosynthesis via DXP pathway; isopentenyl diphosphate from 1-deoxy-D-xylulose 5-phosphate: step 5/6.</text>
</comment>
<comment type="similarity">
    <text evidence="1">Belongs to the IspG family.</text>
</comment>
<keyword id="KW-0004">4Fe-4S</keyword>
<keyword id="KW-0408">Iron</keyword>
<keyword id="KW-0411">Iron-sulfur</keyword>
<keyword id="KW-0414">Isoprene biosynthesis</keyword>
<keyword id="KW-0479">Metal-binding</keyword>
<keyword id="KW-0560">Oxidoreductase</keyword>
<dbReference type="EC" id="1.17.7.3" evidence="1"/>
<dbReference type="EMBL" id="BX572594">
    <property type="protein sequence ID" value="CAE25963.1"/>
    <property type="molecule type" value="Genomic_DNA"/>
</dbReference>
<dbReference type="SMR" id="Q6NCF3"/>
<dbReference type="STRING" id="258594.RPA0519"/>
<dbReference type="eggNOG" id="COG0821">
    <property type="taxonomic scope" value="Bacteria"/>
</dbReference>
<dbReference type="HOGENOM" id="CLU_042258_1_0_5"/>
<dbReference type="PhylomeDB" id="Q6NCF3"/>
<dbReference type="UniPathway" id="UPA00056">
    <property type="reaction ID" value="UER00096"/>
</dbReference>
<dbReference type="GO" id="GO:0051539">
    <property type="term" value="F:4 iron, 4 sulfur cluster binding"/>
    <property type="evidence" value="ECO:0007669"/>
    <property type="project" value="UniProtKB-UniRule"/>
</dbReference>
<dbReference type="GO" id="GO:0046429">
    <property type="term" value="F:4-hydroxy-3-methylbut-2-en-1-yl diphosphate synthase activity (ferredoxin)"/>
    <property type="evidence" value="ECO:0007669"/>
    <property type="project" value="UniProtKB-UniRule"/>
</dbReference>
<dbReference type="GO" id="GO:0141197">
    <property type="term" value="F:4-hydroxy-3-methylbut-2-enyl-diphosphate synthase activity (flavodoxin)"/>
    <property type="evidence" value="ECO:0007669"/>
    <property type="project" value="UniProtKB-EC"/>
</dbReference>
<dbReference type="GO" id="GO:0005506">
    <property type="term" value="F:iron ion binding"/>
    <property type="evidence" value="ECO:0007669"/>
    <property type="project" value="InterPro"/>
</dbReference>
<dbReference type="GO" id="GO:0019288">
    <property type="term" value="P:isopentenyl diphosphate biosynthetic process, methylerythritol 4-phosphate pathway"/>
    <property type="evidence" value="ECO:0007669"/>
    <property type="project" value="UniProtKB-UniRule"/>
</dbReference>
<dbReference type="GO" id="GO:0016114">
    <property type="term" value="P:terpenoid biosynthetic process"/>
    <property type="evidence" value="ECO:0007669"/>
    <property type="project" value="InterPro"/>
</dbReference>
<dbReference type="FunFam" id="3.20.20.20:FF:000001">
    <property type="entry name" value="4-hydroxy-3-methylbut-2-en-1-yl diphosphate synthase (flavodoxin)"/>
    <property type="match status" value="1"/>
</dbReference>
<dbReference type="FunFam" id="3.30.413.10:FF:000012">
    <property type="entry name" value="4-hydroxy-3-methylbut-2-en-1-yl diphosphate synthase (flavodoxin)"/>
    <property type="match status" value="1"/>
</dbReference>
<dbReference type="Gene3D" id="3.20.20.20">
    <property type="entry name" value="Dihydropteroate synthase-like"/>
    <property type="match status" value="1"/>
</dbReference>
<dbReference type="Gene3D" id="3.30.413.10">
    <property type="entry name" value="Sulfite Reductase Hemoprotein, domain 1"/>
    <property type="match status" value="1"/>
</dbReference>
<dbReference type="HAMAP" id="MF_00159">
    <property type="entry name" value="IspG"/>
    <property type="match status" value="1"/>
</dbReference>
<dbReference type="InterPro" id="IPR011005">
    <property type="entry name" value="Dihydropteroate_synth-like_sf"/>
</dbReference>
<dbReference type="InterPro" id="IPR016425">
    <property type="entry name" value="IspG_bac"/>
</dbReference>
<dbReference type="InterPro" id="IPR004588">
    <property type="entry name" value="IspG_bac-typ"/>
</dbReference>
<dbReference type="InterPro" id="IPR045854">
    <property type="entry name" value="NO2/SO3_Rdtase_4Fe4S_sf"/>
</dbReference>
<dbReference type="NCBIfam" id="TIGR00612">
    <property type="entry name" value="ispG_gcpE"/>
    <property type="match status" value="1"/>
</dbReference>
<dbReference type="NCBIfam" id="NF001540">
    <property type="entry name" value="PRK00366.1"/>
    <property type="match status" value="1"/>
</dbReference>
<dbReference type="PANTHER" id="PTHR30454">
    <property type="entry name" value="4-HYDROXY-3-METHYLBUT-2-EN-1-YL DIPHOSPHATE SYNTHASE"/>
    <property type="match status" value="1"/>
</dbReference>
<dbReference type="PANTHER" id="PTHR30454:SF0">
    <property type="entry name" value="4-HYDROXY-3-METHYLBUT-2-EN-1-YL DIPHOSPHATE SYNTHASE (FERREDOXIN), CHLOROPLASTIC"/>
    <property type="match status" value="1"/>
</dbReference>
<dbReference type="Pfam" id="PF04551">
    <property type="entry name" value="GcpE"/>
    <property type="match status" value="1"/>
</dbReference>
<dbReference type="PIRSF" id="PIRSF004640">
    <property type="entry name" value="IspG"/>
    <property type="match status" value="1"/>
</dbReference>
<protein>
    <recommendedName>
        <fullName evidence="1">4-hydroxy-3-methylbut-2-en-1-yl diphosphate synthase (flavodoxin)</fullName>
        <ecNumber evidence="1">1.17.7.3</ecNumber>
    </recommendedName>
    <alternativeName>
        <fullName evidence="1">1-hydroxy-2-methyl-2-(E)-butenyl 4-diphosphate synthase</fullName>
    </alternativeName>
</protein>
<gene>
    <name evidence="1" type="primary">ispG</name>
    <name type="synonym">gcpE</name>
    <name type="ordered locus">RPA0519</name>
</gene>
<organism>
    <name type="scientific">Rhodopseudomonas palustris (strain ATCC BAA-98 / CGA009)</name>
    <dbReference type="NCBI Taxonomy" id="258594"/>
    <lineage>
        <taxon>Bacteria</taxon>
        <taxon>Pseudomonadati</taxon>
        <taxon>Pseudomonadota</taxon>
        <taxon>Alphaproteobacteria</taxon>
        <taxon>Hyphomicrobiales</taxon>
        <taxon>Nitrobacteraceae</taxon>
        <taxon>Rhodopseudomonas</taxon>
    </lineage>
</organism>
<reference key="1">
    <citation type="journal article" date="2004" name="Nat. Biotechnol.">
        <title>Complete genome sequence of the metabolically versatile photosynthetic bacterium Rhodopseudomonas palustris.</title>
        <authorList>
            <person name="Larimer F.W."/>
            <person name="Chain P."/>
            <person name="Hauser L."/>
            <person name="Lamerdin J.E."/>
            <person name="Malfatti S."/>
            <person name="Do L."/>
            <person name="Land M.L."/>
            <person name="Pelletier D.A."/>
            <person name="Beatty J.T."/>
            <person name="Lang A.S."/>
            <person name="Tabita F.R."/>
            <person name="Gibson J.L."/>
            <person name="Hanson T.E."/>
            <person name="Bobst C."/>
            <person name="Torres y Torres J.L."/>
            <person name="Peres C."/>
            <person name="Harrison F.H."/>
            <person name="Gibson J."/>
            <person name="Harwood C.S."/>
        </authorList>
    </citation>
    <scope>NUCLEOTIDE SEQUENCE [LARGE SCALE GENOMIC DNA]</scope>
    <source>
        <strain>ATCC BAA-98 / CGA009</strain>
    </source>
</reference>
<evidence type="ECO:0000255" key="1">
    <source>
        <dbReference type="HAMAP-Rule" id="MF_00159"/>
    </source>
</evidence>
<proteinExistence type="inferred from homology"/>
<feature type="chain" id="PRO_0000190625" description="4-hydroxy-3-methylbut-2-en-1-yl diphosphate synthase (flavodoxin)">
    <location>
        <begin position="1"/>
        <end position="441"/>
    </location>
</feature>
<feature type="binding site" evidence="1">
    <location>
        <position position="320"/>
    </location>
    <ligand>
        <name>[4Fe-4S] cluster</name>
        <dbReference type="ChEBI" id="CHEBI:49883"/>
    </ligand>
</feature>
<feature type="binding site" evidence="1">
    <location>
        <position position="323"/>
    </location>
    <ligand>
        <name>[4Fe-4S] cluster</name>
        <dbReference type="ChEBI" id="CHEBI:49883"/>
    </ligand>
</feature>
<feature type="binding site" evidence="1">
    <location>
        <position position="366"/>
    </location>
    <ligand>
        <name>[4Fe-4S] cluster</name>
        <dbReference type="ChEBI" id="CHEBI:49883"/>
    </ligand>
</feature>
<feature type="binding site" evidence="1">
    <location>
        <position position="373"/>
    </location>
    <ligand>
        <name>[4Fe-4S] cluster</name>
        <dbReference type="ChEBI" id="CHEBI:49883"/>
    </ligand>
</feature>
<sequence>MSPKPDIRTAMNKLENPLRDDVAGPAPRHQTTQVMVGDVAVGGGAPIVVQSMTNTDTADVEGTIKQIAALARAGSEMVRITVDREEAAAAVPHIRDGIRKLGLTTPIIGDFHYIGHKLLAEYPACAEALDKYRINPGNVGFKNKRDTQFADIVEIAIKNNKAVRIGANWGSLDQELLTKLMDENAASANPRDVRAVTREAMVQSALLSAARAEEIGLPKNKMILSAKVSAVQDLIAVYQDLASRSDYAIHLGLTEAGMGSKGIVASSAALGILLQQGIGDTIRISLTPEPGGDRTREVQVGQELLQTMGFRTFVPLVAACPGCGRTTSTTFQELARSIQDFIRDEMPEWRSRYPGVENLNVAVMGCIVNGPGESKHANIGISLPGTGETPAAPVFVDGEKFRTLRGENIAADFKALVIDYIEQRYGATPKPDAAQMVPAAE</sequence>